<feature type="chain" id="PRO_0000097835" description="Cyclic pyranopterin monophosphate synthase">
    <location>
        <begin position="1"/>
        <end position="162"/>
    </location>
</feature>
<feature type="active site" evidence="1">
    <location>
        <position position="131"/>
    </location>
</feature>
<feature type="binding site" evidence="1">
    <location>
        <begin position="75"/>
        <end position="77"/>
    </location>
    <ligand>
        <name>substrate</name>
    </ligand>
</feature>
<feature type="binding site" evidence="1">
    <location>
        <begin position="116"/>
        <end position="117"/>
    </location>
    <ligand>
        <name>substrate</name>
    </ligand>
</feature>
<dbReference type="EC" id="4.6.1.17" evidence="1"/>
<dbReference type="EMBL" id="AE015929">
    <property type="protein sequence ID" value="AAO05488.1"/>
    <property type="molecule type" value="Genomic_DNA"/>
</dbReference>
<dbReference type="RefSeq" id="NP_765402.1">
    <property type="nucleotide sequence ID" value="NC_004461.1"/>
</dbReference>
<dbReference type="RefSeq" id="WP_002438509.1">
    <property type="nucleotide sequence ID" value="NZ_WBME01000034.1"/>
</dbReference>
<dbReference type="SMR" id="Q8CNE0"/>
<dbReference type="GeneID" id="50018049"/>
<dbReference type="KEGG" id="sep:SE_1847"/>
<dbReference type="PATRIC" id="fig|176280.10.peg.1805"/>
<dbReference type="eggNOG" id="COG0315">
    <property type="taxonomic scope" value="Bacteria"/>
</dbReference>
<dbReference type="HOGENOM" id="CLU_074693_1_1_9"/>
<dbReference type="OrthoDB" id="9794429at2"/>
<dbReference type="UniPathway" id="UPA00344"/>
<dbReference type="Proteomes" id="UP000001411">
    <property type="component" value="Chromosome"/>
</dbReference>
<dbReference type="GO" id="GO:0061799">
    <property type="term" value="F:cyclic pyranopterin monophosphate synthase activity"/>
    <property type="evidence" value="ECO:0007669"/>
    <property type="project" value="UniProtKB-UniRule"/>
</dbReference>
<dbReference type="GO" id="GO:0006777">
    <property type="term" value="P:Mo-molybdopterin cofactor biosynthetic process"/>
    <property type="evidence" value="ECO:0007669"/>
    <property type="project" value="UniProtKB-UniRule"/>
</dbReference>
<dbReference type="CDD" id="cd01420">
    <property type="entry name" value="MoaC_PE"/>
    <property type="match status" value="1"/>
</dbReference>
<dbReference type="Gene3D" id="3.30.70.640">
    <property type="entry name" value="Molybdopterin cofactor biosynthesis C (MoaC) domain"/>
    <property type="match status" value="1"/>
</dbReference>
<dbReference type="HAMAP" id="MF_01224_B">
    <property type="entry name" value="MoaC_B"/>
    <property type="match status" value="1"/>
</dbReference>
<dbReference type="InterPro" id="IPR023045">
    <property type="entry name" value="MoaC"/>
</dbReference>
<dbReference type="InterPro" id="IPR047594">
    <property type="entry name" value="MoaC_bact/euk"/>
</dbReference>
<dbReference type="InterPro" id="IPR036522">
    <property type="entry name" value="MoaC_sf"/>
</dbReference>
<dbReference type="InterPro" id="IPR050105">
    <property type="entry name" value="MoCo_biosynth_MoaA/MoaC"/>
</dbReference>
<dbReference type="InterPro" id="IPR002820">
    <property type="entry name" value="Mopterin_CF_biosynth-C_dom"/>
</dbReference>
<dbReference type="NCBIfam" id="TIGR00581">
    <property type="entry name" value="moaC"/>
    <property type="match status" value="1"/>
</dbReference>
<dbReference type="NCBIfam" id="NF006870">
    <property type="entry name" value="PRK09364.1"/>
    <property type="match status" value="1"/>
</dbReference>
<dbReference type="PANTHER" id="PTHR22960">
    <property type="entry name" value="MOLYBDOPTERIN COFACTOR SYNTHESIS PROTEIN A"/>
    <property type="match status" value="1"/>
</dbReference>
<dbReference type="Pfam" id="PF01967">
    <property type="entry name" value="MoaC"/>
    <property type="match status" value="1"/>
</dbReference>
<dbReference type="SUPFAM" id="SSF55040">
    <property type="entry name" value="Molybdenum cofactor biosynthesis protein C, MoaC"/>
    <property type="match status" value="1"/>
</dbReference>
<gene>
    <name evidence="1" type="primary">moaC</name>
    <name type="ordered locus">SE_1847</name>
</gene>
<sequence>MTNFTHINKQGNAKMVDVSNKEITKRVAEAHSSIIVNEKIYSQITQNTNSKGNVLNTAQIAGIMAAKNTSTIIPMCHPLPLTGIDISFKWDSNNDDSYRLNITAVVSTTGKTGVEMEALTAASVTALTIYDMTKAIDKGMIIGETYLESKSGGKSGDFHRKN</sequence>
<comment type="function">
    <text evidence="1">Catalyzes the conversion of (8S)-3',8-cyclo-7,8-dihydroguanosine 5'-triphosphate to cyclic pyranopterin monophosphate (cPMP).</text>
</comment>
<comment type="catalytic activity">
    <reaction evidence="1">
        <text>(8S)-3',8-cyclo-7,8-dihydroguanosine 5'-triphosphate = cyclic pyranopterin phosphate + diphosphate</text>
        <dbReference type="Rhea" id="RHEA:49580"/>
        <dbReference type="ChEBI" id="CHEBI:33019"/>
        <dbReference type="ChEBI" id="CHEBI:59648"/>
        <dbReference type="ChEBI" id="CHEBI:131766"/>
        <dbReference type="EC" id="4.6.1.17"/>
    </reaction>
</comment>
<comment type="pathway">
    <text evidence="1">Cofactor biosynthesis; molybdopterin biosynthesis.</text>
</comment>
<comment type="subunit">
    <text evidence="1">Homohexamer; trimer of dimers.</text>
</comment>
<comment type="similarity">
    <text evidence="1">Belongs to the MoaC family.</text>
</comment>
<protein>
    <recommendedName>
        <fullName evidence="1">Cyclic pyranopterin monophosphate synthase</fullName>
        <ecNumber evidence="1">4.6.1.17</ecNumber>
    </recommendedName>
    <alternativeName>
        <fullName evidence="1">Molybdenum cofactor biosynthesis protein C</fullName>
    </alternativeName>
</protein>
<proteinExistence type="inferred from homology"/>
<name>MOAC_STAES</name>
<reference key="1">
    <citation type="journal article" date="2003" name="Mol. Microbiol.">
        <title>Genome-based analysis of virulence genes in a non-biofilm-forming Staphylococcus epidermidis strain (ATCC 12228).</title>
        <authorList>
            <person name="Zhang Y.-Q."/>
            <person name="Ren S.-X."/>
            <person name="Li H.-L."/>
            <person name="Wang Y.-X."/>
            <person name="Fu G."/>
            <person name="Yang J."/>
            <person name="Qin Z.-Q."/>
            <person name="Miao Y.-G."/>
            <person name="Wang W.-Y."/>
            <person name="Chen R.-S."/>
            <person name="Shen Y."/>
            <person name="Chen Z."/>
            <person name="Yuan Z.-H."/>
            <person name="Zhao G.-P."/>
            <person name="Qu D."/>
            <person name="Danchin A."/>
            <person name="Wen Y.-M."/>
        </authorList>
    </citation>
    <scope>NUCLEOTIDE SEQUENCE [LARGE SCALE GENOMIC DNA]</scope>
    <source>
        <strain>ATCC 12228 / FDA PCI 1200</strain>
    </source>
</reference>
<keyword id="KW-0456">Lyase</keyword>
<keyword id="KW-0501">Molybdenum cofactor biosynthesis</keyword>
<accession>Q8CNE0</accession>
<organism>
    <name type="scientific">Staphylococcus epidermidis (strain ATCC 12228 / FDA PCI 1200)</name>
    <dbReference type="NCBI Taxonomy" id="176280"/>
    <lineage>
        <taxon>Bacteria</taxon>
        <taxon>Bacillati</taxon>
        <taxon>Bacillota</taxon>
        <taxon>Bacilli</taxon>
        <taxon>Bacillales</taxon>
        <taxon>Staphylococcaceae</taxon>
        <taxon>Staphylococcus</taxon>
    </lineage>
</organism>
<evidence type="ECO:0000255" key="1">
    <source>
        <dbReference type="HAMAP-Rule" id="MF_01224"/>
    </source>
</evidence>